<dbReference type="EC" id="6.3.2.2" evidence="1"/>
<dbReference type="EMBL" id="AL123456">
    <property type="protein sequence ID" value="CCP43164.1"/>
    <property type="molecule type" value="Genomic_DNA"/>
</dbReference>
<dbReference type="PIR" id="G70631">
    <property type="entry name" value="G70631"/>
</dbReference>
<dbReference type="RefSeq" id="NP_214947.1">
    <property type="nucleotide sequence ID" value="NC_000962.3"/>
</dbReference>
<dbReference type="RefSeq" id="WP_003900145.1">
    <property type="nucleotide sequence ID" value="NZ_NVQJ01000002.1"/>
</dbReference>
<dbReference type="SMR" id="P9WPK9"/>
<dbReference type="FunCoup" id="P9WPK9">
    <property type="interactions" value="14"/>
</dbReference>
<dbReference type="STRING" id="83332.Rv0433"/>
<dbReference type="PaxDb" id="83332-Rv0433"/>
<dbReference type="DNASU" id="886356"/>
<dbReference type="GeneID" id="886356"/>
<dbReference type="KEGG" id="mtu:Rv0433"/>
<dbReference type="KEGG" id="mtv:RVBD_0433"/>
<dbReference type="TubercuList" id="Rv0433"/>
<dbReference type="eggNOG" id="COG2170">
    <property type="taxonomic scope" value="Bacteria"/>
</dbReference>
<dbReference type="InParanoid" id="P9WPK9"/>
<dbReference type="OrthoDB" id="9769628at2"/>
<dbReference type="PhylomeDB" id="P9WPK9"/>
<dbReference type="Proteomes" id="UP000001584">
    <property type="component" value="Chromosome"/>
</dbReference>
<dbReference type="GO" id="GO:0005524">
    <property type="term" value="F:ATP binding"/>
    <property type="evidence" value="ECO:0007669"/>
    <property type="project" value="UniProtKB-KW"/>
</dbReference>
<dbReference type="GO" id="GO:0004357">
    <property type="term" value="F:glutamate-cysteine ligase activity"/>
    <property type="evidence" value="ECO:0007669"/>
    <property type="project" value="UniProtKB-EC"/>
</dbReference>
<dbReference type="GO" id="GO:0016879">
    <property type="term" value="F:ligase activity, forming carbon-nitrogen bonds"/>
    <property type="evidence" value="ECO:0000318"/>
    <property type="project" value="GO_Central"/>
</dbReference>
<dbReference type="GO" id="GO:0042398">
    <property type="term" value="P:modified amino acid biosynthetic process"/>
    <property type="evidence" value="ECO:0007669"/>
    <property type="project" value="InterPro"/>
</dbReference>
<dbReference type="FunFam" id="3.30.590.20:FF:000004">
    <property type="entry name" value="Putative glutamate--cysteine ligase 2"/>
    <property type="match status" value="1"/>
</dbReference>
<dbReference type="Gene3D" id="3.30.590.20">
    <property type="match status" value="1"/>
</dbReference>
<dbReference type="HAMAP" id="MF_01609">
    <property type="entry name" value="Glu_cys_ligase_2"/>
    <property type="match status" value="1"/>
</dbReference>
<dbReference type="InterPro" id="IPR050141">
    <property type="entry name" value="GCL_type2/YbdK_subfam"/>
</dbReference>
<dbReference type="InterPro" id="IPR006336">
    <property type="entry name" value="GCS2"/>
</dbReference>
<dbReference type="InterPro" id="IPR014746">
    <property type="entry name" value="Gln_synth/guanido_kin_cat_dom"/>
</dbReference>
<dbReference type="InterPro" id="IPR011793">
    <property type="entry name" value="YbdK"/>
</dbReference>
<dbReference type="NCBIfam" id="TIGR02050">
    <property type="entry name" value="gshA_cyan_rel"/>
    <property type="match status" value="1"/>
</dbReference>
<dbReference type="NCBIfam" id="NF010042">
    <property type="entry name" value="PRK13517.1-2"/>
    <property type="match status" value="1"/>
</dbReference>
<dbReference type="NCBIfam" id="NF010043">
    <property type="entry name" value="PRK13517.1-3"/>
    <property type="match status" value="1"/>
</dbReference>
<dbReference type="NCBIfam" id="NF010044">
    <property type="entry name" value="PRK13517.1-4"/>
    <property type="match status" value="1"/>
</dbReference>
<dbReference type="PANTHER" id="PTHR36510">
    <property type="entry name" value="GLUTAMATE--CYSTEINE LIGASE 2-RELATED"/>
    <property type="match status" value="1"/>
</dbReference>
<dbReference type="PANTHER" id="PTHR36510:SF1">
    <property type="entry name" value="GLUTAMATE--CYSTEINE LIGASE 2-RELATED"/>
    <property type="match status" value="1"/>
</dbReference>
<dbReference type="Pfam" id="PF04107">
    <property type="entry name" value="GCS2"/>
    <property type="match status" value="1"/>
</dbReference>
<dbReference type="SUPFAM" id="SSF55931">
    <property type="entry name" value="Glutamine synthetase/guanido kinase"/>
    <property type="match status" value="1"/>
</dbReference>
<proteinExistence type="evidence at protein level"/>
<comment type="function">
    <text evidence="1">ATP-dependent carboxylate-amine ligase which exhibits weak glutamate--cysteine ligase activity.</text>
</comment>
<comment type="catalytic activity">
    <reaction evidence="1">
        <text>L-cysteine + L-glutamate + ATP = gamma-L-glutamyl-L-cysteine + ADP + phosphate + H(+)</text>
        <dbReference type="Rhea" id="RHEA:13285"/>
        <dbReference type="ChEBI" id="CHEBI:15378"/>
        <dbReference type="ChEBI" id="CHEBI:29985"/>
        <dbReference type="ChEBI" id="CHEBI:30616"/>
        <dbReference type="ChEBI" id="CHEBI:35235"/>
        <dbReference type="ChEBI" id="CHEBI:43474"/>
        <dbReference type="ChEBI" id="CHEBI:58173"/>
        <dbReference type="ChEBI" id="CHEBI:456216"/>
        <dbReference type="EC" id="6.3.2.2"/>
    </reaction>
</comment>
<comment type="similarity">
    <text evidence="1">Belongs to the glutamate--cysteine ligase type 2 family. YbdK subfamily.</text>
</comment>
<name>GCS2_MYCTU</name>
<evidence type="ECO:0000255" key="1">
    <source>
        <dbReference type="HAMAP-Rule" id="MF_01609"/>
    </source>
</evidence>
<accession>P9WPK9</accession>
<accession>L0T5C8</accession>
<accession>P64693</accession>
<accession>P96279</accession>
<keyword id="KW-0067">ATP-binding</keyword>
<keyword id="KW-0436">Ligase</keyword>
<keyword id="KW-0547">Nucleotide-binding</keyword>
<keyword id="KW-1185">Reference proteome</keyword>
<organism>
    <name type="scientific">Mycobacterium tuberculosis (strain ATCC 25618 / H37Rv)</name>
    <dbReference type="NCBI Taxonomy" id="83332"/>
    <lineage>
        <taxon>Bacteria</taxon>
        <taxon>Bacillati</taxon>
        <taxon>Actinomycetota</taxon>
        <taxon>Actinomycetes</taxon>
        <taxon>Mycobacteriales</taxon>
        <taxon>Mycobacteriaceae</taxon>
        <taxon>Mycobacterium</taxon>
        <taxon>Mycobacterium tuberculosis complex</taxon>
    </lineage>
</organism>
<protein>
    <recommendedName>
        <fullName evidence="1">Putative glutamate--cysteine ligase 2</fullName>
        <ecNumber evidence="1">6.3.2.2</ecNumber>
    </recommendedName>
    <alternativeName>
        <fullName evidence="1">Gamma-glutamylcysteine synthetase 2</fullName>
        <shortName evidence="1">GCS 2</shortName>
        <shortName evidence="1">Gamma-GCS 2</shortName>
    </alternativeName>
</protein>
<feature type="chain" id="PRO_0000218208" description="Putative glutamate--cysteine ligase 2">
    <location>
        <begin position="1"/>
        <end position="376"/>
    </location>
</feature>
<gene>
    <name type="ordered locus">Rv0433</name>
    <name type="ORF">MTCY22G10.30</name>
</gene>
<sequence>MPARRSAARIDFAGSPRPTLGVEWEFALVDSQTRDLSNEATAVIAEIGENPRVHKELLRNTVEIVSGICECTAEAMQDLRDTLGPARQIVRDRGMELFCAGTHPFARWSAQKLTDAPRYAELIKRTQWWGRQMLIWGVHVHVGIRSAHKVMPIMTSLLNYYPHLLALSASSPWWGGEDTGYASNRAMMFQQLPTAGLPFHFQRWAEFEGFVYDQKKTGIIDHMDEIRWDIRPSPHLGTLEVRICDGVSNLRELGALVALTHCLIVDLDRRLDAGETLPTMPPWHVQENKWRAARYGLDAVIILDADSNERLVTDDLADVLTRLEPVAKSLNCADELAAVSDIYRDGASYQRQLRVAQQHDGDLRAVVDALVAELVI</sequence>
<reference key="1">
    <citation type="journal article" date="1998" name="Nature">
        <title>Deciphering the biology of Mycobacterium tuberculosis from the complete genome sequence.</title>
        <authorList>
            <person name="Cole S.T."/>
            <person name="Brosch R."/>
            <person name="Parkhill J."/>
            <person name="Garnier T."/>
            <person name="Churcher C.M."/>
            <person name="Harris D.E."/>
            <person name="Gordon S.V."/>
            <person name="Eiglmeier K."/>
            <person name="Gas S."/>
            <person name="Barry C.E. III"/>
            <person name="Tekaia F."/>
            <person name="Badcock K."/>
            <person name="Basham D."/>
            <person name="Brown D."/>
            <person name="Chillingworth T."/>
            <person name="Connor R."/>
            <person name="Davies R.M."/>
            <person name="Devlin K."/>
            <person name="Feltwell T."/>
            <person name="Gentles S."/>
            <person name="Hamlin N."/>
            <person name="Holroyd S."/>
            <person name="Hornsby T."/>
            <person name="Jagels K."/>
            <person name="Krogh A."/>
            <person name="McLean J."/>
            <person name="Moule S."/>
            <person name="Murphy L.D."/>
            <person name="Oliver S."/>
            <person name="Osborne J."/>
            <person name="Quail M.A."/>
            <person name="Rajandream M.A."/>
            <person name="Rogers J."/>
            <person name="Rutter S."/>
            <person name="Seeger K."/>
            <person name="Skelton S."/>
            <person name="Squares S."/>
            <person name="Squares R."/>
            <person name="Sulston J.E."/>
            <person name="Taylor K."/>
            <person name="Whitehead S."/>
            <person name="Barrell B.G."/>
        </authorList>
    </citation>
    <scope>NUCLEOTIDE SEQUENCE [LARGE SCALE GENOMIC DNA]</scope>
    <source>
        <strain>ATCC 25618 / H37Rv</strain>
    </source>
</reference>
<reference key="2">
    <citation type="journal article" date="2011" name="Mol. Cell. Proteomics">
        <title>Proteogenomic analysis of Mycobacterium tuberculosis by high resolution mass spectrometry.</title>
        <authorList>
            <person name="Kelkar D.S."/>
            <person name="Kumar D."/>
            <person name="Kumar P."/>
            <person name="Balakrishnan L."/>
            <person name="Muthusamy B."/>
            <person name="Yadav A.K."/>
            <person name="Shrivastava P."/>
            <person name="Marimuthu A."/>
            <person name="Anand S."/>
            <person name="Sundaram H."/>
            <person name="Kingsbury R."/>
            <person name="Harsha H.C."/>
            <person name="Nair B."/>
            <person name="Prasad T.S."/>
            <person name="Chauhan D.S."/>
            <person name="Katoch K."/>
            <person name="Katoch V.M."/>
            <person name="Kumar P."/>
            <person name="Chaerkady R."/>
            <person name="Ramachandran S."/>
            <person name="Dash D."/>
            <person name="Pandey A."/>
        </authorList>
    </citation>
    <scope>IDENTIFICATION BY MASS SPECTROMETRY [LARGE SCALE ANALYSIS]</scope>
    <source>
        <strain>ATCC 25618 / H37Rv</strain>
    </source>
</reference>